<proteinExistence type="inferred from homology"/>
<evidence type="ECO:0000255" key="1">
    <source>
        <dbReference type="HAMAP-Rule" id="MF_00041"/>
    </source>
</evidence>
<feature type="chain" id="PRO_0000240909" description="Cysteine--tRNA ligase">
    <location>
        <begin position="1"/>
        <end position="485"/>
    </location>
</feature>
<feature type="short sequence motif" description="'HIGH' region">
    <location>
        <begin position="29"/>
        <end position="39"/>
    </location>
</feature>
<feature type="short sequence motif" description="'KMSKS' region">
    <location>
        <begin position="265"/>
        <end position="269"/>
    </location>
</feature>
<feature type="binding site" evidence="1">
    <location>
        <position position="27"/>
    </location>
    <ligand>
        <name>Zn(2+)</name>
        <dbReference type="ChEBI" id="CHEBI:29105"/>
    </ligand>
</feature>
<feature type="binding site" evidence="1">
    <location>
        <position position="208"/>
    </location>
    <ligand>
        <name>Zn(2+)</name>
        <dbReference type="ChEBI" id="CHEBI:29105"/>
    </ligand>
</feature>
<feature type="binding site" evidence="1">
    <location>
        <position position="233"/>
    </location>
    <ligand>
        <name>Zn(2+)</name>
        <dbReference type="ChEBI" id="CHEBI:29105"/>
    </ligand>
</feature>
<feature type="binding site" evidence="1">
    <location>
        <position position="237"/>
    </location>
    <ligand>
        <name>Zn(2+)</name>
        <dbReference type="ChEBI" id="CHEBI:29105"/>
    </ligand>
</feature>
<feature type="binding site" evidence="1">
    <location>
        <position position="268"/>
    </location>
    <ligand>
        <name>ATP</name>
        <dbReference type="ChEBI" id="CHEBI:30616"/>
    </ligand>
</feature>
<name>SYC_OLEA2</name>
<accession>Q30ZH8</accession>
<organism>
    <name type="scientific">Oleidesulfovibrio alaskensis (strain ATCC BAA-1058 / DSM 17464 / G20)</name>
    <name type="common">Desulfovibrio alaskensis</name>
    <dbReference type="NCBI Taxonomy" id="207559"/>
    <lineage>
        <taxon>Bacteria</taxon>
        <taxon>Pseudomonadati</taxon>
        <taxon>Thermodesulfobacteriota</taxon>
        <taxon>Desulfovibrionia</taxon>
        <taxon>Desulfovibrionales</taxon>
        <taxon>Desulfovibrionaceae</taxon>
        <taxon>Oleidesulfovibrio</taxon>
    </lineage>
</organism>
<comment type="catalytic activity">
    <reaction evidence="1">
        <text>tRNA(Cys) + L-cysteine + ATP = L-cysteinyl-tRNA(Cys) + AMP + diphosphate</text>
        <dbReference type="Rhea" id="RHEA:17773"/>
        <dbReference type="Rhea" id="RHEA-COMP:9661"/>
        <dbReference type="Rhea" id="RHEA-COMP:9679"/>
        <dbReference type="ChEBI" id="CHEBI:30616"/>
        <dbReference type="ChEBI" id="CHEBI:33019"/>
        <dbReference type="ChEBI" id="CHEBI:35235"/>
        <dbReference type="ChEBI" id="CHEBI:78442"/>
        <dbReference type="ChEBI" id="CHEBI:78517"/>
        <dbReference type="ChEBI" id="CHEBI:456215"/>
        <dbReference type="EC" id="6.1.1.16"/>
    </reaction>
</comment>
<comment type="cofactor">
    <cofactor evidence="1">
        <name>Zn(2+)</name>
        <dbReference type="ChEBI" id="CHEBI:29105"/>
    </cofactor>
    <text evidence="1">Binds 1 zinc ion per subunit.</text>
</comment>
<comment type="subunit">
    <text evidence="1">Monomer.</text>
</comment>
<comment type="subcellular location">
    <subcellularLocation>
        <location evidence="1">Cytoplasm</location>
    </subcellularLocation>
</comment>
<comment type="similarity">
    <text evidence="1">Belongs to the class-I aminoacyl-tRNA synthetase family.</text>
</comment>
<sequence length="485" mass="55156">MQLYNTLTRKKEKFIPQREGKASVYVCGITAYDLCHLGHARSSVAFDVLVRYLRHTGLDVTFVRNFTDVDDKIIKRAGETGLTSTEVAEKYMAAFHEDMDRLGCLRADIEPRCTQHIGEMIALCEDLISKGKAYSTASGDVYFRVRSFASYGKLSGRDVDDMRSGARVAPGEEKEDPLDFALWKSAKPGEPYWESPWGNGRPGWHIECSAMSEKHLPLPLDIHGGGQDLVFPHHENEIAQTEAATGKEFARYWVHNGFVQVNAEKMSKSLGNFSTIRDILQGYLPETLRYFLLTKHYRSPIDFTFDGMDEAEKNLRRIYQTLNLVENELQKTKWSAAPLPEEVLSEMDETERAWNEAMEDDLNTAAALGHIFGLVRLVNRIIEDKTMRKSAQARDALLRMQSMMARWGAVLGLFTRQPAEFLREMRDCRAARRDVDTARVETLLLERQEARKAKDFERSDAIREELARMGVEVQDTPAGAAWDIA</sequence>
<reference key="1">
    <citation type="journal article" date="2011" name="J. Bacteriol.">
        <title>Complete genome sequence and updated annotation of Desulfovibrio alaskensis G20.</title>
        <authorList>
            <person name="Hauser L.J."/>
            <person name="Land M.L."/>
            <person name="Brown S.D."/>
            <person name="Larimer F."/>
            <person name="Keller K.L."/>
            <person name="Rapp-Giles B.J."/>
            <person name="Price M.N."/>
            <person name="Lin M."/>
            <person name="Bruce D.C."/>
            <person name="Detter J.C."/>
            <person name="Tapia R."/>
            <person name="Han C.S."/>
            <person name="Goodwin L.A."/>
            <person name="Cheng J.F."/>
            <person name="Pitluck S."/>
            <person name="Copeland A."/>
            <person name="Lucas S."/>
            <person name="Nolan M."/>
            <person name="Lapidus A.L."/>
            <person name="Palumbo A.V."/>
            <person name="Wall J.D."/>
        </authorList>
    </citation>
    <scope>NUCLEOTIDE SEQUENCE [LARGE SCALE GENOMIC DNA]</scope>
    <source>
        <strain>ATCC BAA-1058 / DSM 17464 / G20</strain>
    </source>
</reference>
<gene>
    <name evidence="1" type="primary">cysS</name>
    <name type="ordered locus">Dde_2121</name>
</gene>
<protein>
    <recommendedName>
        <fullName evidence="1">Cysteine--tRNA ligase</fullName>
        <ecNumber evidence="1">6.1.1.16</ecNumber>
    </recommendedName>
    <alternativeName>
        <fullName evidence="1">Cysteinyl-tRNA synthetase</fullName>
        <shortName evidence="1">CysRS</shortName>
    </alternativeName>
</protein>
<dbReference type="EC" id="6.1.1.16" evidence="1"/>
<dbReference type="EMBL" id="CP000112">
    <property type="protein sequence ID" value="ABB38918.1"/>
    <property type="molecule type" value="Genomic_DNA"/>
</dbReference>
<dbReference type="RefSeq" id="WP_011368021.1">
    <property type="nucleotide sequence ID" value="NC_007519.1"/>
</dbReference>
<dbReference type="SMR" id="Q30ZH8"/>
<dbReference type="STRING" id="207559.Dde_2121"/>
<dbReference type="KEGG" id="dde:Dde_2121"/>
<dbReference type="eggNOG" id="COG0215">
    <property type="taxonomic scope" value="Bacteria"/>
</dbReference>
<dbReference type="HOGENOM" id="CLU_013528_0_1_7"/>
<dbReference type="Proteomes" id="UP000002710">
    <property type="component" value="Chromosome"/>
</dbReference>
<dbReference type="GO" id="GO:0005829">
    <property type="term" value="C:cytosol"/>
    <property type="evidence" value="ECO:0007669"/>
    <property type="project" value="TreeGrafter"/>
</dbReference>
<dbReference type="GO" id="GO:0005524">
    <property type="term" value="F:ATP binding"/>
    <property type="evidence" value="ECO:0007669"/>
    <property type="project" value="UniProtKB-UniRule"/>
</dbReference>
<dbReference type="GO" id="GO:0004817">
    <property type="term" value="F:cysteine-tRNA ligase activity"/>
    <property type="evidence" value="ECO:0007669"/>
    <property type="project" value="UniProtKB-UniRule"/>
</dbReference>
<dbReference type="GO" id="GO:0008270">
    <property type="term" value="F:zinc ion binding"/>
    <property type="evidence" value="ECO:0007669"/>
    <property type="project" value="UniProtKB-UniRule"/>
</dbReference>
<dbReference type="GO" id="GO:0006423">
    <property type="term" value="P:cysteinyl-tRNA aminoacylation"/>
    <property type="evidence" value="ECO:0007669"/>
    <property type="project" value="UniProtKB-UniRule"/>
</dbReference>
<dbReference type="CDD" id="cd00672">
    <property type="entry name" value="CysRS_core"/>
    <property type="match status" value="1"/>
</dbReference>
<dbReference type="FunFam" id="3.40.50.620:FF:000009">
    <property type="entry name" value="Cysteine--tRNA ligase"/>
    <property type="match status" value="1"/>
</dbReference>
<dbReference type="Gene3D" id="1.20.120.1910">
    <property type="entry name" value="Cysteine-tRNA ligase, C-terminal anti-codon recognition domain"/>
    <property type="match status" value="1"/>
</dbReference>
<dbReference type="Gene3D" id="3.40.50.620">
    <property type="entry name" value="HUPs"/>
    <property type="match status" value="1"/>
</dbReference>
<dbReference type="HAMAP" id="MF_00041">
    <property type="entry name" value="Cys_tRNA_synth"/>
    <property type="match status" value="1"/>
</dbReference>
<dbReference type="InterPro" id="IPR015803">
    <property type="entry name" value="Cys-tRNA-ligase"/>
</dbReference>
<dbReference type="InterPro" id="IPR015273">
    <property type="entry name" value="Cys-tRNA-synt_Ia_DALR"/>
</dbReference>
<dbReference type="InterPro" id="IPR024909">
    <property type="entry name" value="Cys-tRNA/MSH_ligase"/>
</dbReference>
<dbReference type="InterPro" id="IPR056411">
    <property type="entry name" value="CysS_C"/>
</dbReference>
<dbReference type="InterPro" id="IPR014729">
    <property type="entry name" value="Rossmann-like_a/b/a_fold"/>
</dbReference>
<dbReference type="InterPro" id="IPR032678">
    <property type="entry name" value="tRNA-synt_1_cat_dom"/>
</dbReference>
<dbReference type="InterPro" id="IPR009080">
    <property type="entry name" value="tRNAsynth_Ia_anticodon-bd"/>
</dbReference>
<dbReference type="NCBIfam" id="TIGR00435">
    <property type="entry name" value="cysS"/>
    <property type="match status" value="1"/>
</dbReference>
<dbReference type="PANTHER" id="PTHR10890:SF3">
    <property type="entry name" value="CYSTEINE--TRNA LIGASE, CYTOPLASMIC"/>
    <property type="match status" value="1"/>
</dbReference>
<dbReference type="PANTHER" id="PTHR10890">
    <property type="entry name" value="CYSTEINYL-TRNA SYNTHETASE"/>
    <property type="match status" value="1"/>
</dbReference>
<dbReference type="Pfam" id="PF23493">
    <property type="entry name" value="CysS_C"/>
    <property type="match status" value="1"/>
</dbReference>
<dbReference type="Pfam" id="PF09190">
    <property type="entry name" value="DALR_2"/>
    <property type="match status" value="1"/>
</dbReference>
<dbReference type="Pfam" id="PF01406">
    <property type="entry name" value="tRNA-synt_1e"/>
    <property type="match status" value="1"/>
</dbReference>
<dbReference type="PRINTS" id="PR00983">
    <property type="entry name" value="TRNASYNTHCYS"/>
</dbReference>
<dbReference type="SMART" id="SM00840">
    <property type="entry name" value="DALR_2"/>
    <property type="match status" value="1"/>
</dbReference>
<dbReference type="SUPFAM" id="SSF47323">
    <property type="entry name" value="Anticodon-binding domain of a subclass of class I aminoacyl-tRNA synthetases"/>
    <property type="match status" value="1"/>
</dbReference>
<dbReference type="SUPFAM" id="SSF52374">
    <property type="entry name" value="Nucleotidylyl transferase"/>
    <property type="match status" value="1"/>
</dbReference>
<keyword id="KW-0030">Aminoacyl-tRNA synthetase</keyword>
<keyword id="KW-0067">ATP-binding</keyword>
<keyword id="KW-0963">Cytoplasm</keyword>
<keyword id="KW-0436">Ligase</keyword>
<keyword id="KW-0479">Metal-binding</keyword>
<keyword id="KW-0547">Nucleotide-binding</keyword>
<keyword id="KW-0648">Protein biosynthesis</keyword>
<keyword id="KW-1185">Reference proteome</keyword>
<keyword id="KW-0862">Zinc</keyword>